<evidence type="ECO:0000255" key="1">
    <source>
        <dbReference type="HAMAP-Rule" id="MF_00072"/>
    </source>
</evidence>
<comment type="function">
    <text evidence="1">Increases the formation of ribosomal termination complexes and stimulates activities of RF-1 and RF-2. It binds guanine nucleotides and has strong preference for UGA stop codons. It may interact directly with the ribosome. The stimulation of RF-1 and RF-2 is significantly reduced by GTP and GDP, but not by GMP.</text>
</comment>
<comment type="subcellular location">
    <subcellularLocation>
        <location evidence="1">Cytoplasm</location>
    </subcellularLocation>
</comment>
<comment type="similarity">
    <text evidence="1">Belongs to the TRAFAC class translation factor GTPase superfamily. Classic translation factor GTPase family. PrfC subfamily.</text>
</comment>
<sequence>MSIRDEIKKRRTFAIISHPDAGKTTITEQLLYFGGEIREAGTVKGKKTGNFAKSDWMDIEKQRGISVTSSVMQFDYAGKRVNILDTPGHEDFSEDTYRTLMAVDAAVMVVDSAKGIEAQTKKLFEVVKHRGIPVFTFMNKLDRDGREPLDLLEELEEVLGIASYPMNWPIGMGKAFEGLYDLYNERLELYKGNERFAKIEDGDTLFANNPFYEQTKEDIELLTEAGNEFSEEAILAGELTPVFFGSALTNFGVQTFLDTFLKFAPEPHGHKTVDGDEIDPLNKDFSGFVFKIQANMDPRHRDRIAFVRIVSGEFERGMSVNLTRTGKGAKLSNVTQFMAESRENVENAVAGDIIGVYDTGTYQVGDTLTVGKNKFEFEPLPTFTPELFMKVSAKNVMKQKSFHKGIEQLVQEGAIQLYTNYQTGEYMLGAVGQLQFEVFKHRMENEYNAEVVMTPMGKKTVRWIQPEDLDERMSSSRNILAKDRFDQPVFLFENDFALRWFADKYPDVTLEEKM</sequence>
<name>RF3_STRT2</name>
<accession>Q5M364</accession>
<feature type="chain" id="PRO_0000242217" description="Peptide chain release factor 3">
    <location>
        <begin position="1"/>
        <end position="514"/>
    </location>
</feature>
<feature type="domain" description="tr-type G">
    <location>
        <begin position="8"/>
        <end position="268"/>
    </location>
</feature>
<feature type="binding site" evidence="1">
    <location>
        <begin position="17"/>
        <end position="24"/>
    </location>
    <ligand>
        <name>GTP</name>
        <dbReference type="ChEBI" id="CHEBI:37565"/>
    </ligand>
</feature>
<feature type="binding site" evidence="1">
    <location>
        <begin position="85"/>
        <end position="89"/>
    </location>
    <ligand>
        <name>GTP</name>
        <dbReference type="ChEBI" id="CHEBI:37565"/>
    </ligand>
</feature>
<feature type="binding site" evidence="1">
    <location>
        <begin position="139"/>
        <end position="142"/>
    </location>
    <ligand>
        <name>GTP</name>
        <dbReference type="ChEBI" id="CHEBI:37565"/>
    </ligand>
</feature>
<reference key="1">
    <citation type="journal article" date="2004" name="Nat. Biotechnol.">
        <title>Complete sequence and comparative genome analysis of the dairy bacterium Streptococcus thermophilus.</title>
        <authorList>
            <person name="Bolotin A."/>
            <person name="Quinquis B."/>
            <person name="Renault P."/>
            <person name="Sorokin A."/>
            <person name="Ehrlich S.D."/>
            <person name="Kulakauskas S."/>
            <person name="Lapidus A."/>
            <person name="Goltsman E."/>
            <person name="Mazur M."/>
            <person name="Pusch G.D."/>
            <person name="Fonstein M."/>
            <person name="Overbeek R."/>
            <person name="Kyprides N."/>
            <person name="Purnelle B."/>
            <person name="Prozzi D."/>
            <person name="Ngui K."/>
            <person name="Masuy D."/>
            <person name="Hancy F."/>
            <person name="Burteau S."/>
            <person name="Boutry M."/>
            <person name="Delcour J."/>
            <person name="Goffeau A."/>
            <person name="Hols P."/>
        </authorList>
    </citation>
    <scope>NUCLEOTIDE SEQUENCE [LARGE SCALE GENOMIC DNA]</scope>
    <source>
        <strain>ATCC BAA-250 / LMG 18311</strain>
    </source>
</reference>
<dbReference type="EMBL" id="CP000023">
    <property type="protein sequence ID" value="AAV61177.1"/>
    <property type="molecule type" value="Genomic_DNA"/>
</dbReference>
<dbReference type="RefSeq" id="WP_011226410.1">
    <property type="nucleotide sequence ID" value="NC_006448.1"/>
</dbReference>
<dbReference type="SMR" id="Q5M364"/>
<dbReference type="STRING" id="264199.stu1574"/>
<dbReference type="KEGG" id="stl:stu1574"/>
<dbReference type="PATRIC" id="fig|264199.4.peg.1545"/>
<dbReference type="eggNOG" id="COG4108">
    <property type="taxonomic scope" value="Bacteria"/>
</dbReference>
<dbReference type="HOGENOM" id="CLU_002794_2_1_9"/>
<dbReference type="Proteomes" id="UP000001170">
    <property type="component" value="Chromosome"/>
</dbReference>
<dbReference type="GO" id="GO:0005829">
    <property type="term" value="C:cytosol"/>
    <property type="evidence" value="ECO:0007669"/>
    <property type="project" value="TreeGrafter"/>
</dbReference>
<dbReference type="GO" id="GO:0005525">
    <property type="term" value="F:GTP binding"/>
    <property type="evidence" value="ECO:0007669"/>
    <property type="project" value="UniProtKB-UniRule"/>
</dbReference>
<dbReference type="GO" id="GO:0003924">
    <property type="term" value="F:GTPase activity"/>
    <property type="evidence" value="ECO:0007669"/>
    <property type="project" value="InterPro"/>
</dbReference>
<dbReference type="GO" id="GO:0016150">
    <property type="term" value="F:translation release factor activity, codon nonspecific"/>
    <property type="evidence" value="ECO:0007669"/>
    <property type="project" value="TreeGrafter"/>
</dbReference>
<dbReference type="GO" id="GO:0016149">
    <property type="term" value="F:translation release factor activity, codon specific"/>
    <property type="evidence" value="ECO:0007669"/>
    <property type="project" value="UniProtKB-UniRule"/>
</dbReference>
<dbReference type="GO" id="GO:0006449">
    <property type="term" value="P:regulation of translational termination"/>
    <property type="evidence" value="ECO:0007669"/>
    <property type="project" value="UniProtKB-UniRule"/>
</dbReference>
<dbReference type="CDD" id="cd04169">
    <property type="entry name" value="RF3"/>
    <property type="match status" value="1"/>
</dbReference>
<dbReference type="CDD" id="cd16259">
    <property type="entry name" value="RF3_III"/>
    <property type="match status" value="1"/>
</dbReference>
<dbReference type="FunFam" id="2.40.30.10:FF:000040">
    <property type="entry name" value="Peptide chain release factor 3"/>
    <property type="match status" value="1"/>
</dbReference>
<dbReference type="FunFam" id="3.30.70.3280:FF:000001">
    <property type="entry name" value="Peptide chain release factor 3"/>
    <property type="match status" value="1"/>
</dbReference>
<dbReference type="FunFam" id="3.40.50.300:FF:000542">
    <property type="entry name" value="Peptide chain release factor 3"/>
    <property type="match status" value="1"/>
</dbReference>
<dbReference type="Gene3D" id="3.40.50.300">
    <property type="entry name" value="P-loop containing nucleotide triphosphate hydrolases"/>
    <property type="match status" value="1"/>
</dbReference>
<dbReference type="Gene3D" id="3.30.70.3280">
    <property type="entry name" value="Peptide chain release factor 3, domain III"/>
    <property type="match status" value="1"/>
</dbReference>
<dbReference type="Gene3D" id="2.40.30.10">
    <property type="entry name" value="Translation factors"/>
    <property type="match status" value="1"/>
</dbReference>
<dbReference type="HAMAP" id="MF_00072">
    <property type="entry name" value="Rel_fac_3"/>
    <property type="match status" value="1"/>
</dbReference>
<dbReference type="InterPro" id="IPR053905">
    <property type="entry name" value="EF-G-like_DII"/>
</dbReference>
<dbReference type="InterPro" id="IPR035647">
    <property type="entry name" value="EFG_III/V"/>
</dbReference>
<dbReference type="InterPro" id="IPR031157">
    <property type="entry name" value="G_TR_CS"/>
</dbReference>
<dbReference type="InterPro" id="IPR027417">
    <property type="entry name" value="P-loop_NTPase"/>
</dbReference>
<dbReference type="InterPro" id="IPR004548">
    <property type="entry name" value="PrfC"/>
</dbReference>
<dbReference type="InterPro" id="IPR032090">
    <property type="entry name" value="RF3_C"/>
</dbReference>
<dbReference type="InterPro" id="IPR038467">
    <property type="entry name" value="RF3_dom_3_sf"/>
</dbReference>
<dbReference type="InterPro" id="IPR041732">
    <property type="entry name" value="RF3_GTP-bd"/>
</dbReference>
<dbReference type="InterPro" id="IPR005225">
    <property type="entry name" value="Small_GTP-bd"/>
</dbReference>
<dbReference type="InterPro" id="IPR000795">
    <property type="entry name" value="T_Tr_GTP-bd_dom"/>
</dbReference>
<dbReference type="InterPro" id="IPR009000">
    <property type="entry name" value="Transl_B-barrel_sf"/>
</dbReference>
<dbReference type="NCBIfam" id="TIGR00503">
    <property type="entry name" value="prfC"/>
    <property type="match status" value="1"/>
</dbReference>
<dbReference type="NCBIfam" id="NF001964">
    <property type="entry name" value="PRK00741.1"/>
    <property type="match status" value="1"/>
</dbReference>
<dbReference type="NCBIfam" id="TIGR00231">
    <property type="entry name" value="small_GTP"/>
    <property type="match status" value="1"/>
</dbReference>
<dbReference type="PANTHER" id="PTHR43556">
    <property type="entry name" value="PEPTIDE CHAIN RELEASE FACTOR RF3"/>
    <property type="match status" value="1"/>
</dbReference>
<dbReference type="PANTHER" id="PTHR43556:SF2">
    <property type="entry name" value="PEPTIDE CHAIN RELEASE FACTOR RF3"/>
    <property type="match status" value="1"/>
</dbReference>
<dbReference type="Pfam" id="PF22042">
    <property type="entry name" value="EF-G_D2"/>
    <property type="match status" value="1"/>
</dbReference>
<dbReference type="Pfam" id="PF00009">
    <property type="entry name" value="GTP_EFTU"/>
    <property type="match status" value="1"/>
</dbReference>
<dbReference type="Pfam" id="PF16658">
    <property type="entry name" value="RF3_C"/>
    <property type="match status" value="1"/>
</dbReference>
<dbReference type="PRINTS" id="PR00315">
    <property type="entry name" value="ELONGATNFCT"/>
</dbReference>
<dbReference type="PRINTS" id="PR01037">
    <property type="entry name" value="TCRTETOQM"/>
</dbReference>
<dbReference type="SUPFAM" id="SSF54980">
    <property type="entry name" value="EF-G C-terminal domain-like"/>
    <property type="match status" value="1"/>
</dbReference>
<dbReference type="SUPFAM" id="SSF52540">
    <property type="entry name" value="P-loop containing nucleoside triphosphate hydrolases"/>
    <property type="match status" value="1"/>
</dbReference>
<dbReference type="SUPFAM" id="SSF50447">
    <property type="entry name" value="Translation proteins"/>
    <property type="match status" value="1"/>
</dbReference>
<dbReference type="PROSITE" id="PS00301">
    <property type="entry name" value="G_TR_1"/>
    <property type="match status" value="1"/>
</dbReference>
<dbReference type="PROSITE" id="PS51722">
    <property type="entry name" value="G_TR_2"/>
    <property type="match status" value="1"/>
</dbReference>
<keyword id="KW-0963">Cytoplasm</keyword>
<keyword id="KW-0342">GTP-binding</keyword>
<keyword id="KW-0547">Nucleotide-binding</keyword>
<keyword id="KW-0648">Protein biosynthesis</keyword>
<keyword id="KW-1185">Reference proteome</keyword>
<gene>
    <name evidence="1" type="primary">prfC</name>
    <name type="ordered locus">stu1574</name>
</gene>
<organism>
    <name type="scientific">Streptococcus thermophilus (strain ATCC BAA-250 / LMG 18311)</name>
    <dbReference type="NCBI Taxonomy" id="264199"/>
    <lineage>
        <taxon>Bacteria</taxon>
        <taxon>Bacillati</taxon>
        <taxon>Bacillota</taxon>
        <taxon>Bacilli</taxon>
        <taxon>Lactobacillales</taxon>
        <taxon>Streptococcaceae</taxon>
        <taxon>Streptococcus</taxon>
    </lineage>
</organism>
<protein>
    <recommendedName>
        <fullName evidence="1">Peptide chain release factor 3</fullName>
        <shortName evidence="1">RF-3</shortName>
    </recommendedName>
</protein>
<proteinExistence type="inferred from homology"/>